<reference key="1">
    <citation type="journal article" date="2009" name="J. Bacteriol.">
        <title>Genomic sequencing reveals regulatory mutations and recombinational events in the widely used MC4100 lineage of Escherichia coli K-12.</title>
        <authorList>
            <person name="Ferenci T."/>
            <person name="Zhou Z."/>
            <person name="Betteridge T."/>
            <person name="Ren Y."/>
            <person name="Liu Y."/>
            <person name="Feng L."/>
            <person name="Reeves P.R."/>
            <person name="Wang L."/>
        </authorList>
    </citation>
    <scope>NUCLEOTIDE SEQUENCE [LARGE SCALE GENOMIC DNA]</scope>
    <source>
        <strain>K12 / MC4100 / BW2952</strain>
    </source>
</reference>
<accession>C4ZSR8</accession>
<evidence type="ECO:0000255" key="1">
    <source>
        <dbReference type="HAMAP-Rule" id="MF_01547"/>
    </source>
</evidence>
<dbReference type="EC" id="2.1.1.166" evidence="1"/>
<dbReference type="EMBL" id="CP001396">
    <property type="protein sequence ID" value="ACR61754.1"/>
    <property type="molecule type" value="Genomic_DNA"/>
</dbReference>
<dbReference type="RefSeq" id="WP_000145975.1">
    <property type="nucleotide sequence ID" value="NC_012759.1"/>
</dbReference>
<dbReference type="SMR" id="C4ZSR8"/>
<dbReference type="GeneID" id="93778802"/>
<dbReference type="KEGG" id="ebw:BWG_2881"/>
<dbReference type="HOGENOM" id="CLU_009422_4_0_6"/>
<dbReference type="GO" id="GO:0005737">
    <property type="term" value="C:cytoplasm"/>
    <property type="evidence" value="ECO:0007669"/>
    <property type="project" value="UniProtKB-SubCell"/>
</dbReference>
<dbReference type="GO" id="GO:0008650">
    <property type="term" value="F:rRNA (uridine-2'-O-)-methyltransferase activity"/>
    <property type="evidence" value="ECO:0007669"/>
    <property type="project" value="UniProtKB-UniRule"/>
</dbReference>
<dbReference type="CDD" id="cd02440">
    <property type="entry name" value="AdoMet_MTases"/>
    <property type="match status" value="1"/>
</dbReference>
<dbReference type="FunFam" id="3.40.50.150:FF:000005">
    <property type="entry name" value="Ribosomal RNA large subunit methyltransferase E"/>
    <property type="match status" value="1"/>
</dbReference>
<dbReference type="Gene3D" id="3.40.50.150">
    <property type="entry name" value="Vaccinia Virus protein VP39"/>
    <property type="match status" value="1"/>
</dbReference>
<dbReference type="HAMAP" id="MF_01547">
    <property type="entry name" value="RNA_methyltr_E"/>
    <property type="match status" value="1"/>
</dbReference>
<dbReference type="InterPro" id="IPR050082">
    <property type="entry name" value="RNA_methyltr_RlmE"/>
</dbReference>
<dbReference type="InterPro" id="IPR002877">
    <property type="entry name" value="RNA_MeTrfase_FtsJ_dom"/>
</dbReference>
<dbReference type="InterPro" id="IPR015507">
    <property type="entry name" value="rRNA-MeTfrase_E"/>
</dbReference>
<dbReference type="InterPro" id="IPR004512">
    <property type="entry name" value="rRNA_MeTrfase_gammaproteobac"/>
</dbReference>
<dbReference type="InterPro" id="IPR029063">
    <property type="entry name" value="SAM-dependent_MTases_sf"/>
</dbReference>
<dbReference type="NCBIfam" id="NF008390">
    <property type="entry name" value="PRK11188.1"/>
    <property type="match status" value="1"/>
</dbReference>
<dbReference type="NCBIfam" id="TIGR00438">
    <property type="entry name" value="rrmJ"/>
    <property type="match status" value="1"/>
</dbReference>
<dbReference type="PANTHER" id="PTHR10920">
    <property type="entry name" value="RIBOSOMAL RNA METHYLTRANSFERASE"/>
    <property type="match status" value="1"/>
</dbReference>
<dbReference type="PANTHER" id="PTHR10920:SF18">
    <property type="entry name" value="RRNA METHYLTRANSFERASE 2, MITOCHONDRIAL"/>
    <property type="match status" value="1"/>
</dbReference>
<dbReference type="Pfam" id="PF01728">
    <property type="entry name" value="FtsJ"/>
    <property type="match status" value="1"/>
</dbReference>
<dbReference type="PIRSF" id="PIRSF005461">
    <property type="entry name" value="23S_rRNA_mtase"/>
    <property type="match status" value="1"/>
</dbReference>
<dbReference type="SUPFAM" id="SSF53335">
    <property type="entry name" value="S-adenosyl-L-methionine-dependent methyltransferases"/>
    <property type="match status" value="1"/>
</dbReference>
<sequence>MTGKKRSASSSRWLQEHFSDKYVQQAQKKGLRSRAWFKLDEIQQSDKLFKPGMTVVDLGAAPGGWSQYVVTQIGGKGRIIACDLLPMDPIVGVDFLQGDFRDELVMKALLERVGDSKVQVVMSDMAPNMSGTPAVDIPRAMYLVELALEMCRDVLAPGGSFVVKVFQGEGFDEYLREIRSLFTKVKVRKPDSSRARSREVYIVATGRKP</sequence>
<organism>
    <name type="scientific">Escherichia coli (strain K12 / MC4100 / BW2952)</name>
    <dbReference type="NCBI Taxonomy" id="595496"/>
    <lineage>
        <taxon>Bacteria</taxon>
        <taxon>Pseudomonadati</taxon>
        <taxon>Pseudomonadota</taxon>
        <taxon>Gammaproteobacteria</taxon>
        <taxon>Enterobacterales</taxon>
        <taxon>Enterobacteriaceae</taxon>
        <taxon>Escherichia</taxon>
    </lineage>
</organism>
<proteinExistence type="inferred from homology"/>
<protein>
    <recommendedName>
        <fullName evidence="1">Ribosomal RNA large subunit methyltransferase E</fullName>
        <ecNumber evidence="1">2.1.1.166</ecNumber>
    </recommendedName>
    <alternativeName>
        <fullName evidence="1">23S rRNA Um2552 methyltransferase</fullName>
    </alternativeName>
    <alternativeName>
        <fullName evidence="1">rRNA (uridine-2'-O-)-methyltransferase</fullName>
    </alternativeName>
</protein>
<keyword id="KW-0963">Cytoplasm</keyword>
<keyword id="KW-0489">Methyltransferase</keyword>
<keyword id="KW-0698">rRNA processing</keyword>
<keyword id="KW-0949">S-adenosyl-L-methionine</keyword>
<keyword id="KW-0808">Transferase</keyword>
<gene>
    <name evidence="1" type="primary">rlmE</name>
    <name evidence="1" type="synonym">ftsJ</name>
    <name evidence="1" type="synonym">rrmJ</name>
    <name type="ordered locus">BWG_2881</name>
</gene>
<feature type="chain" id="PRO_1000215452" description="Ribosomal RNA large subunit methyltransferase E">
    <location>
        <begin position="1"/>
        <end position="209"/>
    </location>
</feature>
<feature type="active site" description="Proton acceptor" evidence="1">
    <location>
        <position position="164"/>
    </location>
</feature>
<feature type="binding site" evidence="1">
    <location>
        <position position="63"/>
    </location>
    <ligand>
        <name>S-adenosyl-L-methionine</name>
        <dbReference type="ChEBI" id="CHEBI:59789"/>
    </ligand>
</feature>
<feature type="binding site" evidence="1">
    <location>
        <position position="65"/>
    </location>
    <ligand>
        <name>S-adenosyl-L-methionine</name>
        <dbReference type="ChEBI" id="CHEBI:59789"/>
    </ligand>
</feature>
<feature type="binding site" evidence="1">
    <location>
        <position position="83"/>
    </location>
    <ligand>
        <name>S-adenosyl-L-methionine</name>
        <dbReference type="ChEBI" id="CHEBI:59789"/>
    </ligand>
</feature>
<feature type="binding site" evidence="1">
    <location>
        <position position="99"/>
    </location>
    <ligand>
        <name>S-adenosyl-L-methionine</name>
        <dbReference type="ChEBI" id="CHEBI:59789"/>
    </ligand>
</feature>
<feature type="binding site" evidence="1">
    <location>
        <position position="124"/>
    </location>
    <ligand>
        <name>S-adenosyl-L-methionine</name>
        <dbReference type="ChEBI" id="CHEBI:59789"/>
    </ligand>
</feature>
<comment type="function">
    <text evidence="1">Specifically methylates the uridine in position 2552 of 23S rRNA at the 2'-O position of the ribose in the fully assembled 50S ribosomal subunit.</text>
</comment>
<comment type="catalytic activity">
    <reaction evidence="1">
        <text>uridine(2552) in 23S rRNA + S-adenosyl-L-methionine = 2'-O-methyluridine(2552) in 23S rRNA + S-adenosyl-L-homocysteine + H(+)</text>
        <dbReference type="Rhea" id="RHEA:42720"/>
        <dbReference type="Rhea" id="RHEA-COMP:10202"/>
        <dbReference type="Rhea" id="RHEA-COMP:10203"/>
        <dbReference type="ChEBI" id="CHEBI:15378"/>
        <dbReference type="ChEBI" id="CHEBI:57856"/>
        <dbReference type="ChEBI" id="CHEBI:59789"/>
        <dbReference type="ChEBI" id="CHEBI:65315"/>
        <dbReference type="ChEBI" id="CHEBI:74478"/>
        <dbReference type="EC" id="2.1.1.166"/>
    </reaction>
</comment>
<comment type="subcellular location">
    <subcellularLocation>
        <location evidence="1">Cytoplasm</location>
    </subcellularLocation>
</comment>
<comment type="similarity">
    <text evidence="1">Belongs to the class I-like SAM-binding methyltransferase superfamily. RNA methyltransferase RlmE family.</text>
</comment>
<name>RLME_ECOBW</name>